<feature type="chain" id="PRO_0000188979" description="Transcription termination factor Rho">
    <location>
        <begin position="1"/>
        <end position="707"/>
    </location>
</feature>
<feature type="domain" description="Rho RNA-BD" evidence="2">
    <location>
        <begin position="331"/>
        <end position="406"/>
    </location>
</feature>
<feature type="region of interest" description="Disordered" evidence="3">
    <location>
        <begin position="1"/>
        <end position="38"/>
    </location>
</feature>
<feature type="region of interest" description="Disordered" evidence="3">
    <location>
        <begin position="76"/>
        <end position="321"/>
    </location>
</feature>
<feature type="compositionally biased region" description="Low complexity" evidence="3">
    <location>
        <begin position="16"/>
        <end position="31"/>
    </location>
</feature>
<feature type="compositionally biased region" description="Low complexity" evidence="3">
    <location>
        <begin position="76"/>
        <end position="93"/>
    </location>
</feature>
<feature type="compositionally biased region" description="Basic and acidic residues" evidence="3">
    <location>
        <begin position="107"/>
        <end position="132"/>
    </location>
</feature>
<feature type="compositionally biased region" description="Low complexity" evidence="3">
    <location>
        <begin position="153"/>
        <end position="163"/>
    </location>
</feature>
<feature type="compositionally biased region" description="Polar residues" evidence="3">
    <location>
        <begin position="176"/>
        <end position="188"/>
    </location>
</feature>
<feature type="compositionally biased region" description="Low complexity" evidence="3">
    <location>
        <begin position="203"/>
        <end position="213"/>
    </location>
</feature>
<feature type="compositionally biased region" description="Basic and acidic residues" evidence="3">
    <location>
        <begin position="215"/>
        <end position="265"/>
    </location>
</feature>
<feature type="compositionally biased region" description="Basic residues" evidence="3">
    <location>
        <begin position="301"/>
        <end position="315"/>
    </location>
</feature>
<feature type="binding site" evidence="1">
    <location>
        <begin position="449"/>
        <end position="454"/>
    </location>
    <ligand>
        <name>ATP</name>
        <dbReference type="ChEBI" id="CHEBI:30616"/>
    </ligand>
</feature>
<feature type="binding site" evidence="1">
    <location>
        <begin position="461"/>
        <end position="466"/>
    </location>
    <ligand>
        <name>ATP</name>
        <dbReference type="ChEBI" id="CHEBI:30616"/>
    </ligand>
</feature>
<feature type="binding site" evidence="1">
    <location>
        <position position="492"/>
    </location>
    <ligand>
        <name>ATP</name>
        <dbReference type="ChEBI" id="CHEBI:30616"/>
    </ligand>
</feature>
<proteinExistence type="evidence at protein level"/>
<accession>P52157</accession>
<gene>
    <name evidence="1" type="primary">rho</name>
</gene>
<comment type="function">
    <text>Facilitates transcription termination by a mechanism that involves Rho binding to the nascent RNA, activation of Rho's RNA-dependent ATPase activity, and release of the mRNA from the DNA template.</text>
</comment>
<comment type="subunit">
    <text evidence="1">Homohexamer. The homohexamer assembles into an open ring structure.</text>
</comment>
<comment type="similarity">
    <text evidence="1">Belongs to the Rho family.</text>
</comment>
<comment type="caution">
    <text evidence="4">It is uncertain whether Met-1 or Met-43 is the initiator.</text>
</comment>
<comment type="sequence caution" evidence="4">
    <conflict type="erroneous initiation">
        <sequence resource="EMBL-CDS" id="CAA64720"/>
    </conflict>
    <text>Truncated N-terminus.</text>
</comment>
<name>RHO_STRLI</name>
<keyword id="KW-0067">ATP-binding</keyword>
<keyword id="KW-0347">Helicase</keyword>
<keyword id="KW-0378">Hydrolase</keyword>
<keyword id="KW-0547">Nucleotide-binding</keyword>
<keyword id="KW-0694">RNA-binding</keyword>
<keyword id="KW-0804">Transcription</keyword>
<keyword id="KW-0805">Transcription regulation</keyword>
<keyword id="KW-0806">Transcription termination</keyword>
<dbReference type="EC" id="3.6.4.-" evidence="1"/>
<dbReference type="EMBL" id="X95444">
    <property type="protein sequence ID" value="CAA64719.1"/>
    <property type="molecule type" value="Genomic_DNA"/>
</dbReference>
<dbReference type="EMBL" id="X95444">
    <property type="protein sequence ID" value="CAA64720.1"/>
    <property type="status" value="ALT_INIT"/>
    <property type="molecule type" value="Genomic_DNA"/>
</dbReference>
<dbReference type="SMR" id="P52157"/>
<dbReference type="GO" id="GO:0005524">
    <property type="term" value="F:ATP binding"/>
    <property type="evidence" value="ECO:0007669"/>
    <property type="project" value="UniProtKB-UniRule"/>
</dbReference>
<dbReference type="GO" id="GO:0016887">
    <property type="term" value="F:ATP hydrolysis activity"/>
    <property type="evidence" value="ECO:0007669"/>
    <property type="project" value="InterPro"/>
</dbReference>
<dbReference type="GO" id="GO:0008186">
    <property type="term" value="F:ATP-dependent activity, acting on RNA"/>
    <property type="evidence" value="ECO:0007669"/>
    <property type="project" value="InterPro"/>
</dbReference>
<dbReference type="GO" id="GO:0004386">
    <property type="term" value="F:helicase activity"/>
    <property type="evidence" value="ECO:0007669"/>
    <property type="project" value="UniProtKB-UniRule"/>
</dbReference>
<dbReference type="GO" id="GO:0003723">
    <property type="term" value="F:RNA binding"/>
    <property type="evidence" value="ECO:0007669"/>
    <property type="project" value="UniProtKB-UniRule"/>
</dbReference>
<dbReference type="GO" id="GO:0006353">
    <property type="term" value="P:DNA-templated transcription termination"/>
    <property type="evidence" value="ECO:0007669"/>
    <property type="project" value="UniProtKB-UniRule"/>
</dbReference>
<dbReference type="CDD" id="cd04459">
    <property type="entry name" value="Rho_CSD"/>
    <property type="match status" value="1"/>
</dbReference>
<dbReference type="CDD" id="cd01128">
    <property type="entry name" value="rho_factor_C"/>
    <property type="match status" value="1"/>
</dbReference>
<dbReference type="FunFam" id="3.40.50.300:FF:000072">
    <property type="entry name" value="Transcription termination factor Rho"/>
    <property type="match status" value="1"/>
</dbReference>
<dbReference type="Gene3D" id="2.40.50.140">
    <property type="entry name" value="Nucleic acid-binding proteins"/>
    <property type="match status" value="1"/>
</dbReference>
<dbReference type="Gene3D" id="3.40.50.300">
    <property type="entry name" value="P-loop containing nucleotide triphosphate hydrolases"/>
    <property type="match status" value="1"/>
</dbReference>
<dbReference type="HAMAP" id="MF_01884">
    <property type="entry name" value="Rho"/>
    <property type="match status" value="1"/>
</dbReference>
<dbReference type="InterPro" id="IPR003593">
    <property type="entry name" value="AAA+_ATPase"/>
</dbReference>
<dbReference type="InterPro" id="IPR000194">
    <property type="entry name" value="ATPase_F1/V1/A1_a/bsu_nucl-bd"/>
</dbReference>
<dbReference type="InterPro" id="IPR011129">
    <property type="entry name" value="CSD"/>
</dbReference>
<dbReference type="InterPro" id="IPR012340">
    <property type="entry name" value="NA-bd_OB-fold"/>
</dbReference>
<dbReference type="InterPro" id="IPR027417">
    <property type="entry name" value="P-loop_NTPase"/>
</dbReference>
<dbReference type="InterPro" id="IPR011112">
    <property type="entry name" value="Rho-like_N"/>
</dbReference>
<dbReference type="InterPro" id="IPR041703">
    <property type="entry name" value="Rho_factor_ATP-bd"/>
</dbReference>
<dbReference type="InterPro" id="IPR036269">
    <property type="entry name" value="Rho_N_sf"/>
</dbReference>
<dbReference type="InterPro" id="IPR011113">
    <property type="entry name" value="Rho_RNA-bd"/>
</dbReference>
<dbReference type="InterPro" id="IPR004665">
    <property type="entry name" value="Term_rho"/>
</dbReference>
<dbReference type="NCBIfam" id="NF006886">
    <property type="entry name" value="PRK09376.1"/>
    <property type="match status" value="1"/>
</dbReference>
<dbReference type="NCBIfam" id="TIGR00767">
    <property type="entry name" value="rho"/>
    <property type="match status" value="1"/>
</dbReference>
<dbReference type="PANTHER" id="PTHR46425">
    <property type="entry name" value="TRANSCRIPTION TERMINATION FACTOR RHO"/>
    <property type="match status" value="1"/>
</dbReference>
<dbReference type="PANTHER" id="PTHR46425:SF1">
    <property type="entry name" value="TRANSCRIPTION TERMINATION FACTOR RHO"/>
    <property type="match status" value="1"/>
</dbReference>
<dbReference type="Pfam" id="PF00006">
    <property type="entry name" value="ATP-synt_ab"/>
    <property type="match status" value="1"/>
</dbReference>
<dbReference type="Pfam" id="PF07498">
    <property type="entry name" value="Rho_N"/>
    <property type="match status" value="1"/>
</dbReference>
<dbReference type="Pfam" id="PF07497">
    <property type="entry name" value="Rho_RNA_bind"/>
    <property type="match status" value="1"/>
</dbReference>
<dbReference type="SMART" id="SM00382">
    <property type="entry name" value="AAA"/>
    <property type="match status" value="1"/>
</dbReference>
<dbReference type="SMART" id="SM00357">
    <property type="entry name" value="CSP"/>
    <property type="match status" value="1"/>
</dbReference>
<dbReference type="SMART" id="SM00959">
    <property type="entry name" value="Rho_N"/>
    <property type="match status" value="1"/>
</dbReference>
<dbReference type="SUPFAM" id="SSF50249">
    <property type="entry name" value="Nucleic acid-binding proteins"/>
    <property type="match status" value="1"/>
</dbReference>
<dbReference type="SUPFAM" id="SSF52540">
    <property type="entry name" value="P-loop containing nucleoside triphosphate hydrolases"/>
    <property type="match status" value="1"/>
</dbReference>
<dbReference type="SUPFAM" id="SSF68912">
    <property type="entry name" value="Rho N-terminal domain-like"/>
    <property type="match status" value="1"/>
</dbReference>
<dbReference type="PROSITE" id="PS51856">
    <property type="entry name" value="RHO_RNA_BD"/>
    <property type="match status" value="1"/>
</dbReference>
<sequence>MSDTTDLMGARVEETAAAPATDASAPATGAGSRRRRGTGLEGMVLAELQQVASGLGIRGTARMRKSQLIEVIKEAQAAGGAPAKAAPAAADTAGETKPKRRSTSRTRTGDEAPAEKAEKAGKADKKADKAAADKAAAQQQIEIPGQPTPKVNASAEQAAPADDAPSERRRRRATSDAGSPSATDTTVAVETRAEPKADTSAPQQSQGHQQGQGDARSDAEGGDGRRRDRRDRGDRDRGDRGDRGDRGDRGDRGERGRDRRNKGDDQQNQGGGRQDRQQQGGGGRQDRQQHDDGYDDDGSGRRGRRGRYRDRRGRRGRDEIQEPQINEDDVLIPVAGILDILDNYAFIRTSGYLPGPNDVYVSLAQVRKNGLRKGDHLTGAVRQPKEGERREKFNALVRLDSVNGMAPEHGRGRPEFNKLTPLYPQDRLRLETDPGVLTTRIIDLVAPIGKGQRGLIVAPPKTGKTMIMQAIANAITHNNPECHLMVVLVDERPEEVTDMQRSVKGEVISSTFDRPAEDHTTVAELAIERAKRLVELGHDVVVLLDSITRLGRAYNLAAPASGRILSGGVDSTALYPPKRFFGAARNIEDGGSLTILATALVDTGSRMDEVIFEEFKGTGNAELKLDRKLADKRIFPAVDVDASGTRKEEILLGSDELAITWKLRRVLHALDQQQAIELLLDKMKQTKSNAEFLIQIQKTTPTPGNGD</sequence>
<evidence type="ECO:0000255" key="1">
    <source>
        <dbReference type="HAMAP-Rule" id="MF_01884"/>
    </source>
</evidence>
<evidence type="ECO:0000255" key="2">
    <source>
        <dbReference type="PROSITE-ProRule" id="PRU01203"/>
    </source>
</evidence>
<evidence type="ECO:0000256" key="3">
    <source>
        <dbReference type="SAM" id="MobiDB-lite"/>
    </source>
</evidence>
<evidence type="ECO:0000305" key="4"/>
<reference key="1">
    <citation type="journal article" date="1996" name="J. Biol. Chem.">
        <title>Isolation and sequencing of the rho gene from Streptomyces lividans ZX7 and characterization of the RNA-dependent NTPase activity of the overexpressed protein.</title>
        <authorList>
            <person name="Ingham C.J."/>
            <person name="Hunter I.S."/>
            <person name="Smith M.C.M."/>
        </authorList>
    </citation>
    <scope>NUCLEOTIDE SEQUENCE [GENOMIC DNA]</scope>
    <scope>CHARACTERIZATION</scope>
    <source>
        <strain>ZX7</strain>
    </source>
</reference>
<organism>
    <name type="scientific">Streptomyces lividans</name>
    <dbReference type="NCBI Taxonomy" id="1916"/>
    <lineage>
        <taxon>Bacteria</taxon>
        <taxon>Bacillati</taxon>
        <taxon>Actinomycetota</taxon>
        <taxon>Actinomycetes</taxon>
        <taxon>Kitasatosporales</taxon>
        <taxon>Streptomycetaceae</taxon>
        <taxon>Streptomyces</taxon>
    </lineage>
</organism>
<protein>
    <recommendedName>
        <fullName evidence="1">Transcription termination factor Rho</fullName>
        <ecNumber evidence="1">3.6.4.-</ecNumber>
    </recommendedName>
    <alternativeName>
        <fullName evidence="1">ATP-dependent helicase Rho</fullName>
    </alternativeName>
</protein>